<comment type="function">
    <text evidence="3">Receptor that mediates peroxisomal import of proteins containing a C-terminal PTS1-type tripeptide peroxisomal targeting signal (SKL-type). Binds to cargo proteins containing a PTS1 peroxisomal targeting signal in the cytosol, and translocates them into the peroxisome matrix by passing through the PEX13-PEX14 docking complex along with cargo proteins. PEX5 receptor is then retrotranslocated into the cytosol, leading to release of bound cargo in the peroxisome matrix, and reset for a subsequent peroxisome import cycle.</text>
</comment>
<comment type="function">
    <text evidence="3">In addition to promoting peroxisomal translocation of proteins containing a PTS1 peroxisomal targeting signal, mediates peroxisomal import of proteins containing a C-terminal PTS2-type peroxisomal targeting signal via its interaction with PEX7. Interaction with PEX7 only takes place when PEX7 is associated with cargo proteins containing a PTS2 peroxisomal targeting signal. PEX7 along with PTS2-containing cargo proteins are then translocated through the PEX13-PEX14 docking complex together with PEX5.</text>
</comment>
<comment type="activity regulation">
    <text evidence="3">Cys-11 acts as a sensor of redox state. In response to oxidative stress, monoubiquitination at Cys-11 is prevented.</text>
</comment>
<comment type="subunit">
    <text evidence="3">Interacts (via WxxxF/Y and LVxEF motifs) with PEX14; promoting translocation through the PEX13-PEX14 docking complex (By similarity). Interacts with PEX12 (By similarity). Interacts (Cys-linked ubiquitinated) with ZFAND6 (By similarity). Interacts (when ubiquitinated at Lys-209) with p62/SQSTM1 (By similarity). Interacts with PEX7, promoting peroxisomal import of proteins containing a C-terminal PTS2-type peroxisomal targeting signal (By similarity). Interacts with DDO; the interaction is direct and required for localization of DDO to the peroxisome (By similarity).</text>
</comment>
<comment type="subcellular location">
    <subcellularLocation>
        <location evidence="3">Cytoplasm</location>
        <location evidence="3">Cytosol</location>
    </subcellularLocation>
    <subcellularLocation>
        <location evidence="3">Peroxisome matrix</location>
    </subcellularLocation>
    <text evidence="1 3">Cycles between the cytosol and the peroxisome matrix (By similarity). Following binding to cargo proteins containing a PTS1 peroxisomal targeting signal in the cytosol, recruited to the docking complex, composed of PEX13 and PEX14, leading to translocation into the peroxisome matrix along with cargo proteins. Export and recycling to the cytosol is initiated by binding to the PEX2-PEX10-PEX12 ligase complex via its unstructured N-terminus that inserts into the ligase pore and emerges in the cytosol (By similarity). Cys-11 of PEX5 is then monoubiquitinated, promoting its extraction from peroxisomal membrane by the PEX1-PEX6 AAA ATPase complex (By similarity). Extraction is accompanied by unfolding of the TPR repeats and release of bound cargo in the peroxisome matrix. The TPR repeats refold in the cytosol and ubiquitination is removed by deubiquitinating enzymes, resetting PEX5 for a subsequent import cycle (By similarity).</text>
</comment>
<comment type="domain">
    <text evidence="3">The TPR repeats mediate interaction with proteins containing a C-terminal PTS1-type tripeptide peroxisomal targeting signal (SKL-type).</text>
</comment>
<comment type="domain">
    <text evidence="3">The WxxxF/Y motifs mediate interaction with PEX14, promoting association with the PEX13-PEX14 docking complex.</text>
</comment>
<comment type="domain">
    <text evidence="1">The amphipathic helix 1 and 2 (AH1 and AH2, respectively) are required for PEX5 retrotranslocation and recycling. AH2 mediates interaction with lumenal side of the PEX2-PEX10-PEX12 ligase complex, while AH1 is required for extraction from peroxisomal membrane by the PEX1-PEX6 AAA ATPase complex.</text>
</comment>
<comment type="PTM">
    <text evidence="2 3">Monoubiquitinated at Cys-11 by PEX2 during PEX5 passage through the retrotranslocation channel (By similarity). Cys-11 monoubiquitination acts as a recognition signal for the PEX1-PEX6 complex and is required for PEX5 extraction and export from peroxisomes. Monoubiquitination at Cys-11 is removed by USP9X in the cytosol, resetting PEX5 for a subsequent import cycle (By similarity). When PEX5 recycling is compromised, polyubiquitinated by PEX10 during its passage through the retrotranslocation channel, leading to its degradation (By similarity). Monoubiquitination at Lys-473 by TRIM37 promotes its stability by preventing its polyubiquitination and degradation by the proteasome. Ubiquitination at Lys-528 is not mediated by the PEX2-PEX10-PEX12 ligase complex and is not related to PEX5 recycling. Monoubiquitinated at Lys-209 by PEX2 following phosphorylation by ATM in response to starvation or reactive oxygen species (ROS), leading to PEX5 recognition by p62/SQSTM1 and induction of pexophagy (By similarity).</text>
</comment>
<comment type="PTM">
    <text evidence="3">Phosphorylated at Ser-140 by ATM in response to reactive oxygen species (ROS), promoting monoubiquitination at Lys-209 and induction of pexophagy.</text>
</comment>
<comment type="similarity">
    <text evidence="5">Belongs to the peroxisomal targeting signal receptor family.</text>
</comment>
<comment type="sequence caution" evidence="5">
    <conflict type="erroneous gene model prediction">
        <sequence resource="EMBL-CDS" id="EDM01958"/>
    </conflict>
</comment>
<sequence>MAMRELVESECGGANPLMKLATHFTQDKALRQEGLRPPWPPGASAAETVSKPLGVGTEDELVAEFLQDQNATLVSRAPQTFKMDDLLAEMQEIEQSNFRQAPQRAPGVADLALSENWAQEFLAAGDAVDVAQDYNETDWSQEFIAEVTDPLSVSPARWAEEYLEQSEEKLWLGDPEGTSTTDRWYDEYHPEEDLQHTASDFVSKVDDPKLANSEFLKFVRQIGEGQVSLESAAGSGRAQAEQWAAEFIQQQGTSEAWVDQFTRPGNKLAALQVEFERAKSAIESDVDFWDKLQAELEEMAKRDAEAHPWLSDYDDLTSASYDKGYQFEEENPLRDHPQPFEEGLRRLEEGDLPNAVLLFEAAVQQDPKHMEAWQYLGTTQAENEQELLAISALRRCLELKPDNRTALMALAVSFTNESLQRQACETLRDWLRYSPAYAHLVAPGEEGASGAGLGPSKRVLGSLLSDSLFLEVKELFLAAVRLDPTSIDPDVQCGLGVLFNLSGEYDKAVDCFTAALSVRPNDYLLWNKLGATLANGNQSEEAVAAYRRALELQPGYIRSRYNLGISCINLGAHREAVEHFLEALNMQRKSRGPRGEGGAMSENIWSTLRLALSMLGQSDAYGAADARDLPALLTMFGLPQ</sequence>
<accession>Q2M2R8</accession>
<dbReference type="EMBL" id="CH473964">
    <property type="protein sequence ID" value="EDM01958.1"/>
    <property type="status" value="ALT_SEQ"/>
    <property type="molecule type" value="Genomic_DNA"/>
</dbReference>
<dbReference type="EMBL" id="BC111709">
    <property type="protein sequence ID" value="AAI11710.1"/>
    <property type="molecule type" value="mRNA"/>
</dbReference>
<dbReference type="RefSeq" id="NP_001164055.1">
    <property type="nucleotide sequence ID" value="NM_001170584.1"/>
</dbReference>
<dbReference type="RefSeq" id="XP_006237446.1">
    <property type="nucleotide sequence ID" value="XM_006237384.2"/>
</dbReference>
<dbReference type="RefSeq" id="XP_006237447.1">
    <property type="nucleotide sequence ID" value="XM_006237385.3"/>
</dbReference>
<dbReference type="RefSeq" id="XP_008761499.1">
    <property type="nucleotide sequence ID" value="XM_008763277.2"/>
</dbReference>
<dbReference type="SMR" id="Q2M2R8"/>
<dbReference type="BioGRID" id="260235">
    <property type="interactions" value="4"/>
</dbReference>
<dbReference type="CORUM" id="Q2M2R8"/>
<dbReference type="FunCoup" id="Q2M2R8">
    <property type="interactions" value="751"/>
</dbReference>
<dbReference type="STRING" id="10116.ENSRNOP00000070292"/>
<dbReference type="iPTMnet" id="Q2M2R8"/>
<dbReference type="PhosphoSitePlus" id="Q2M2R8"/>
<dbReference type="PaxDb" id="10116-ENSRNOP00000014028"/>
<dbReference type="GeneID" id="312703"/>
<dbReference type="KEGG" id="rno:312703"/>
<dbReference type="UCSC" id="RGD:1307612">
    <property type="organism name" value="rat"/>
</dbReference>
<dbReference type="AGR" id="RGD:1307612"/>
<dbReference type="CTD" id="5830"/>
<dbReference type="RGD" id="1307612">
    <property type="gene designation" value="Pex5"/>
</dbReference>
<dbReference type="eggNOG" id="KOG1125">
    <property type="taxonomic scope" value="Eukaryota"/>
</dbReference>
<dbReference type="HOGENOM" id="CLU_013516_4_0_1"/>
<dbReference type="InParanoid" id="Q2M2R8"/>
<dbReference type="OrthoDB" id="10006023at2759"/>
<dbReference type="PhylomeDB" id="Q2M2R8"/>
<dbReference type="TreeFam" id="TF315044"/>
<dbReference type="Reactome" id="R-RNO-8866654">
    <property type="pathway name" value="E3 ubiquitin ligases ubiquitinate target proteins"/>
</dbReference>
<dbReference type="Reactome" id="R-RNO-9033241">
    <property type="pathway name" value="Peroxisomal protein import"/>
</dbReference>
<dbReference type="Reactome" id="R-RNO-9664873">
    <property type="pathway name" value="Pexophagy"/>
</dbReference>
<dbReference type="PRO" id="PR:Q2M2R8"/>
<dbReference type="Proteomes" id="UP000002494">
    <property type="component" value="Chromosome 4"/>
</dbReference>
<dbReference type="Proteomes" id="UP000234681">
    <property type="component" value="Chromosome 4"/>
</dbReference>
<dbReference type="Bgee" id="ENSRNOG00000010407">
    <property type="expression patterns" value="Expressed in liver and 19 other cell types or tissues"/>
</dbReference>
<dbReference type="GO" id="GO:0005737">
    <property type="term" value="C:cytoplasm"/>
    <property type="evidence" value="ECO:0000266"/>
    <property type="project" value="RGD"/>
</dbReference>
<dbReference type="GO" id="GO:0005829">
    <property type="term" value="C:cytosol"/>
    <property type="evidence" value="ECO:0000266"/>
    <property type="project" value="RGD"/>
</dbReference>
<dbReference type="GO" id="GO:0016020">
    <property type="term" value="C:membrane"/>
    <property type="evidence" value="ECO:0000266"/>
    <property type="project" value="RGD"/>
</dbReference>
<dbReference type="GO" id="GO:0005739">
    <property type="term" value="C:mitochondrion"/>
    <property type="evidence" value="ECO:0007669"/>
    <property type="project" value="GOC"/>
</dbReference>
<dbReference type="GO" id="GO:0005782">
    <property type="term" value="C:peroxisomal matrix"/>
    <property type="evidence" value="ECO:0000250"/>
    <property type="project" value="UniProtKB"/>
</dbReference>
<dbReference type="GO" id="GO:0005778">
    <property type="term" value="C:peroxisomal membrane"/>
    <property type="evidence" value="ECO:0000314"/>
    <property type="project" value="HGNC-UCL"/>
</dbReference>
<dbReference type="GO" id="GO:0005777">
    <property type="term" value="C:peroxisome"/>
    <property type="evidence" value="ECO:0000314"/>
    <property type="project" value="RGD"/>
</dbReference>
<dbReference type="GO" id="GO:0032991">
    <property type="term" value="C:protein-containing complex"/>
    <property type="evidence" value="ECO:0000314"/>
    <property type="project" value="RGD"/>
</dbReference>
<dbReference type="GO" id="GO:0019899">
    <property type="term" value="F:enzyme binding"/>
    <property type="evidence" value="ECO:0000266"/>
    <property type="project" value="RGD"/>
</dbReference>
<dbReference type="GO" id="GO:0005052">
    <property type="term" value="F:peroxisome matrix targeting signal-1 binding"/>
    <property type="evidence" value="ECO:0000250"/>
    <property type="project" value="UniProtKB"/>
</dbReference>
<dbReference type="GO" id="GO:0033328">
    <property type="term" value="F:peroxisome membrane targeting sequence binding"/>
    <property type="evidence" value="ECO:0000266"/>
    <property type="project" value="RGD"/>
</dbReference>
<dbReference type="GO" id="GO:0000268">
    <property type="term" value="F:peroxisome targeting sequence binding"/>
    <property type="evidence" value="ECO:0000266"/>
    <property type="project" value="RGD"/>
</dbReference>
<dbReference type="GO" id="GO:0140597">
    <property type="term" value="F:protein carrier chaperone"/>
    <property type="evidence" value="ECO:0000250"/>
    <property type="project" value="UniProtKB"/>
</dbReference>
<dbReference type="GO" id="GO:0031267">
    <property type="term" value="F:small GTPase binding"/>
    <property type="evidence" value="ECO:0000266"/>
    <property type="project" value="RGD"/>
</dbReference>
<dbReference type="GO" id="GO:0048468">
    <property type="term" value="P:cell development"/>
    <property type="evidence" value="ECO:0000266"/>
    <property type="project" value="RGD"/>
</dbReference>
<dbReference type="GO" id="GO:0034614">
    <property type="term" value="P:cellular response to reactive oxygen species"/>
    <property type="evidence" value="ECO:0000266"/>
    <property type="project" value="RGD"/>
</dbReference>
<dbReference type="GO" id="GO:0021795">
    <property type="term" value="P:cerebral cortex cell migration"/>
    <property type="evidence" value="ECO:0000266"/>
    <property type="project" value="RGD"/>
</dbReference>
<dbReference type="GO" id="GO:0021895">
    <property type="term" value="P:cerebral cortex neuron differentiation"/>
    <property type="evidence" value="ECO:0000266"/>
    <property type="project" value="RGD"/>
</dbReference>
<dbReference type="GO" id="GO:0007029">
    <property type="term" value="P:endoplasmic reticulum organization"/>
    <property type="evidence" value="ECO:0000266"/>
    <property type="project" value="RGD"/>
</dbReference>
<dbReference type="GO" id="GO:0006635">
    <property type="term" value="P:fatty acid beta-oxidation"/>
    <property type="evidence" value="ECO:0000266"/>
    <property type="project" value="RGD"/>
</dbReference>
<dbReference type="GO" id="GO:0006629">
    <property type="term" value="P:lipid metabolic process"/>
    <property type="evidence" value="ECO:0000266"/>
    <property type="project" value="RGD"/>
</dbReference>
<dbReference type="GO" id="GO:0007006">
    <property type="term" value="P:mitochondrial membrane organization"/>
    <property type="evidence" value="ECO:0000266"/>
    <property type="project" value="RGD"/>
</dbReference>
<dbReference type="GO" id="GO:0007005">
    <property type="term" value="P:mitochondrion organization"/>
    <property type="evidence" value="ECO:0000266"/>
    <property type="project" value="RGD"/>
</dbReference>
<dbReference type="GO" id="GO:0031333">
    <property type="term" value="P:negative regulation of protein-containing complex assembly"/>
    <property type="evidence" value="ECO:0000266"/>
    <property type="project" value="RGD"/>
</dbReference>
<dbReference type="GO" id="GO:0050905">
    <property type="term" value="P:neuromuscular process"/>
    <property type="evidence" value="ECO:0000266"/>
    <property type="project" value="RGD"/>
</dbReference>
<dbReference type="GO" id="GO:0001764">
    <property type="term" value="P:neuron migration"/>
    <property type="evidence" value="ECO:0000266"/>
    <property type="project" value="RGD"/>
</dbReference>
<dbReference type="GO" id="GO:0007031">
    <property type="term" value="P:peroxisome organization"/>
    <property type="evidence" value="ECO:0000266"/>
    <property type="project" value="RGD"/>
</dbReference>
<dbReference type="GO" id="GO:0000425">
    <property type="term" value="P:pexophagy"/>
    <property type="evidence" value="ECO:0000250"/>
    <property type="project" value="UniProtKB"/>
</dbReference>
<dbReference type="GO" id="GO:0040018">
    <property type="term" value="P:positive regulation of multicellular organism growth"/>
    <property type="evidence" value="ECO:0000266"/>
    <property type="project" value="RGD"/>
</dbReference>
<dbReference type="GO" id="GO:0016558">
    <property type="term" value="P:protein import into peroxisome matrix"/>
    <property type="evidence" value="ECO:0000250"/>
    <property type="project" value="UniProtKB"/>
</dbReference>
<dbReference type="GO" id="GO:0016560">
    <property type="term" value="P:protein import into peroxisome matrix, docking"/>
    <property type="evidence" value="ECO:0000266"/>
    <property type="project" value="RGD"/>
</dbReference>
<dbReference type="GO" id="GO:0016562">
    <property type="term" value="P:protein import into peroxisome matrix, receptor recycling"/>
    <property type="evidence" value="ECO:0000250"/>
    <property type="project" value="UniProtKB"/>
</dbReference>
<dbReference type="GO" id="GO:0044721">
    <property type="term" value="P:protein import into peroxisome matrix, substrate release"/>
    <property type="evidence" value="ECO:0000250"/>
    <property type="project" value="UniProtKB"/>
</dbReference>
<dbReference type="GO" id="GO:0045046">
    <property type="term" value="P:protein import into peroxisome membrane"/>
    <property type="evidence" value="ECO:0000266"/>
    <property type="project" value="RGD"/>
</dbReference>
<dbReference type="GO" id="GO:0006625">
    <property type="term" value="P:protein targeting to peroxisome"/>
    <property type="evidence" value="ECO:0000266"/>
    <property type="project" value="RGD"/>
</dbReference>
<dbReference type="GO" id="GO:0000038">
    <property type="term" value="P:very long-chain fatty acid metabolic process"/>
    <property type="evidence" value="ECO:0000266"/>
    <property type="project" value="RGD"/>
</dbReference>
<dbReference type="FunFam" id="1.25.40.10:FF:000034">
    <property type="entry name" value="Peroxisomal biogenesis factor 5 isoform 1"/>
    <property type="match status" value="1"/>
</dbReference>
<dbReference type="Gene3D" id="1.25.40.10">
    <property type="entry name" value="Tetratricopeptide repeat domain"/>
    <property type="match status" value="1"/>
</dbReference>
<dbReference type="InterPro" id="IPR024111">
    <property type="entry name" value="PEX5/PEX5L"/>
</dbReference>
<dbReference type="InterPro" id="IPR011990">
    <property type="entry name" value="TPR-like_helical_dom_sf"/>
</dbReference>
<dbReference type="InterPro" id="IPR019734">
    <property type="entry name" value="TPR_rpt"/>
</dbReference>
<dbReference type="PANTHER" id="PTHR10130:SF2">
    <property type="entry name" value="PEROXISOMAL TARGETING SIGNAL 1 RECEPTOR"/>
    <property type="match status" value="1"/>
</dbReference>
<dbReference type="PANTHER" id="PTHR10130">
    <property type="entry name" value="PEROXISOMAL TARGETING SIGNAL 1 RECEPTOR PEX5"/>
    <property type="match status" value="1"/>
</dbReference>
<dbReference type="Pfam" id="PF13432">
    <property type="entry name" value="TPR_16"/>
    <property type="match status" value="2"/>
</dbReference>
<dbReference type="Pfam" id="PF13181">
    <property type="entry name" value="TPR_8"/>
    <property type="match status" value="1"/>
</dbReference>
<dbReference type="SMART" id="SM00028">
    <property type="entry name" value="TPR"/>
    <property type="match status" value="4"/>
</dbReference>
<dbReference type="SUPFAM" id="SSF48452">
    <property type="entry name" value="TPR-like"/>
    <property type="match status" value="1"/>
</dbReference>
<dbReference type="PROSITE" id="PS50005">
    <property type="entry name" value="TPR"/>
    <property type="match status" value="5"/>
</dbReference>
<dbReference type="PROSITE" id="PS50293">
    <property type="entry name" value="TPR_REGION"/>
    <property type="match status" value="1"/>
</dbReference>
<reference key="1">
    <citation type="submission" date="2005-08" db="EMBL/GenBank/DDBJ databases">
        <authorList>
            <person name="Mural R.J."/>
            <person name="Adams M.D."/>
            <person name="Myers E.W."/>
            <person name="Smith H.O."/>
            <person name="Venter J.C."/>
        </authorList>
    </citation>
    <scope>NUCLEOTIDE SEQUENCE [LARGE SCALE GENOMIC DNA]</scope>
</reference>
<reference key="2">
    <citation type="journal article" date="2004" name="Genome Res.">
        <title>The status, quality, and expansion of the NIH full-length cDNA project: the Mammalian Gene Collection (MGC).</title>
        <authorList>
            <consortium name="The MGC Project Team"/>
        </authorList>
    </citation>
    <scope>NUCLEOTIDE SEQUENCE [LARGE SCALE MRNA] OF 408-604</scope>
    <source>
        <tissue>Liver</tissue>
    </source>
</reference>
<reference key="3">
    <citation type="journal article" date="2008" name="J. Biol. Chem.">
        <title>Members of the E2D (UbcH5) family mediate the ubiquitination of the conserved cysteine of Pex5p, the peroxisomal import receptor.</title>
        <authorList>
            <person name="Grou C.P."/>
            <person name="Carvalho A.F."/>
            <person name="Pinto M.P."/>
            <person name="Wiese S."/>
            <person name="Piechura H."/>
            <person name="Meyer H.E."/>
            <person name="Warscheid B."/>
            <person name="Sa-Miranda C."/>
            <person name="Azevedo J.E."/>
        </authorList>
    </citation>
    <scope>UBIQUITINATION AT CYS-11</scope>
</reference>
<protein>
    <recommendedName>
        <fullName>Peroxisomal targeting signal 1 receptor</fullName>
        <shortName>PTS1 receptor</shortName>
        <shortName>PTS1R</shortName>
    </recommendedName>
    <alternativeName>
        <fullName>PTS1-BP</fullName>
    </alternativeName>
    <alternativeName>
        <fullName>Peroxin-5</fullName>
    </alternativeName>
    <alternativeName>
        <fullName>Peroxisomal C-terminal targeting signal import receptor</fullName>
    </alternativeName>
    <alternativeName>
        <fullName>Peroxisome receptor 1</fullName>
    </alternativeName>
</protein>
<gene>
    <name type="primary">Pex5</name>
    <name type="synonym">Pex5_predicted</name>
</gene>
<feature type="chain" id="PRO_0000396503" description="Peroxisomal targeting signal 1 receptor">
    <location>
        <begin position="1"/>
        <end position="640"/>
    </location>
</feature>
<feature type="repeat" description="TPR 1">
    <location>
        <begin position="336"/>
        <end position="369"/>
    </location>
</feature>
<feature type="repeat" description="TPR 2">
    <location>
        <begin position="371"/>
        <end position="403"/>
    </location>
</feature>
<feature type="repeat" description="TPR 3">
    <location>
        <begin position="404"/>
        <end position="437"/>
    </location>
</feature>
<feature type="repeat" description="TPR 4">
    <location>
        <begin position="454"/>
        <end position="486"/>
    </location>
</feature>
<feature type="repeat" description="TPR 5">
    <location>
        <begin position="489"/>
        <end position="522"/>
    </location>
</feature>
<feature type="repeat" description="TPR 6">
    <location>
        <begin position="524"/>
        <end position="556"/>
    </location>
</feature>
<feature type="repeat" description="TPR 7">
    <location>
        <begin position="558"/>
        <end position="590"/>
    </location>
</feature>
<feature type="region of interest" description="Amphipathic helix 1 (AH1)" evidence="1">
    <location>
        <begin position="11"/>
        <end position="33"/>
    </location>
</feature>
<feature type="region of interest" description="Amphipathic helix 2 (AH2)" evidence="1">
    <location>
        <begin position="80"/>
        <end position="98"/>
    </location>
</feature>
<feature type="region of interest" description="Amphipathic helix 3 (AH3)" evidence="1">
    <location>
        <begin position="190"/>
        <end position="206"/>
    </location>
</feature>
<feature type="region of interest" description="Amphipathic helix 4 (AH4)" evidence="1">
    <location>
        <begin position="285"/>
        <end position="301"/>
    </location>
</feature>
<feature type="short sequence motif" description="LVxEF motif" evidence="3">
    <location>
        <begin position="61"/>
        <end position="65"/>
    </location>
</feature>
<feature type="short sequence motif" description="WxxxF/Y motif 1" evidence="1">
    <location>
        <begin position="117"/>
        <end position="121"/>
    </location>
</feature>
<feature type="short sequence motif" description="WxxxF/Y motif 2" evidence="1">
    <location>
        <begin position="139"/>
        <end position="143"/>
    </location>
</feature>
<feature type="short sequence motif" description="WxxxF/Y motif 3" evidence="1">
    <location>
        <begin position="158"/>
        <end position="162"/>
    </location>
</feature>
<feature type="short sequence motif" description="WxxxF/Y motif 4" evidence="1">
    <location>
        <begin position="184"/>
        <end position="188"/>
    </location>
</feature>
<feature type="short sequence motif" description="WxxxF/Y motif 5" evidence="1">
    <location>
        <begin position="243"/>
        <end position="247"/>
    </location>
</feature>
<feature type="short sequence motif" description="WxxxF/Y motif 6" evidence="1">
    <location>
        <begin position="257"/>
        <end position="261"/>
    </location>
</feature>
<feature type="short sequence motif" description="WxxxF/Y motif 7" evidence="1">
    <location>
        <begin position="309"/>
        <end position="313"/>
    </location>
</feature>
<feature type="site" description="Sensor of redox state" evidence="3">
    <location>
        <position position="11"/>
    </location>
</feature>
<feature type="modified residue" description="Phosphoserine" evidence="3">
    <location>
        <position position="114"/>
    </location>
</feature>
<feature type="modified residue" description="Phosphoserine" evidence="3">
    <location>
        <position position="140"/>
    </location>
</feature>
<feature type="modified residue" description="Phosphoserine" evidence="3">
    <location>
        <position position="152"/>
    </location>
</feature>
<feature type="modified residue" description="Phosphoserine" evidence="3">
    <location>
        <position position="154"/>
    </location>
</feature>
<feature type="modified residue" description="Phosphoserine" evidence="3">
    <location>
        <position position="166"/>
    </location>
</feature>
<feature type="modified residue" description="Phosphoserine" evidence="3">
    <location>
        <position position="280"/>
    </location>
</feature>
<feature type="cross-link" description="Glycyl cysteine thioester (Cys-Gly) (interchain with G-Cter in ubiquitin)" evidence="4">
    <location>
        <position position="11"/>
    </location>
</feature>
<feature type="cross-link" description="Glycyl lysine isopeptide (Lys-Gly) (interchain with G-Cter in ubiquitin)" evidence="3">
    <location>
        <position position="209"/>
    </location>
</feature>
<feature type="cross-link" description="Glycyl lysine isopeptide (Lys-Gly) (interchain with G-Cter in ubiquitin)" evidence="3">
    <location>
        <position position="473"/>
    </location>
</feature>
<feature type="cross-link" description="Glycyl lysine isopeptide (Lys-Gly) (interchain with G-Cter in ubiquitin)" evidence="3">
    <location>
        <position position="528"/>
    </location>
</feature>
<name>PEX5_RAT</name>
<organism>
    <name type="scientific">Rattus norvegicus</name>
    <name type="common">Rat</name>
    <dbReference type="NCBI Taxonomy" id="10116"/>
    <lineage>
        <taxon>Eukaryota</taxon>
        <taxon>Metazoa</taxon>
        <taxon>Chordata</taxon>
        <taxon>Craniata</taxon>
        <taxon>Vertebrata</taxon>
        <taxon>Euteleostomi</taxon>
        <taxon>Mammalia</taxon>
        <taxon>Eutheria</taxon>
        <taxon>Euarchontoglires</taxon>
        <taxon>Glires</taxon>
        <taxon>Rodentia</taxon>
        <taxon>Myomorpha</taxon>
        <taxon>Muroidea</taxon>
        <taxon>Muridae</taxon>
        <taxon>Murinae</taxon>
        <taxon>Rattus</taxon>
    </lineage>
</organism>
<keyword id="KW-0963">Cytoplasm</keyword>
<keyword id="KW-1017">Isopeptide bond</keyword>
<keyword id="KW-0576">Peroxisome</keyword>
<keyword id="KW-0597">Phosphoprotein</keyword>
<keyword id="KW-0653">Protein transport</keyword>
<keyword id="KW-1185">Reference proteome</keyword>
<keyword id="KW-0677">Repeat</keyword>
<keyword id="KW-0882">Thioester bond</keyword>
<keyword id="KW-0802">TPR repeat</keyword>
<keyword id="KW-0811">Translocation</keyword>
<keyword id="KW-0813">Transport</keyword>
<keyword id="KW-0832">Ubl conjugation</keyword>
<evidence type="ECO:0000250" key="1">
    <source>
        <dbReference type="UniProtKB" id="A0A1L8FDW4"/>
    </source>
</evidence>
<evidence type="ECO:0000250" key="2">
    <source>
        <dbReference type="UniProtKB" id="P35056"/>
    </source>
</evidence>
<evidence type="ECO:0000250" key="3">
    <source>
        <dbReference type="UniProtKB" id="P50542"/>
    </source>
</evidence>
<evidence type="ECO:0000269" key="4">
    <source>
    </source>
</evidence>
<evidence type="ECO:0000305" key="5"/>
<proteinExistence type="evidence at protein level"/>